<evidence type="ECO:0000255" key="1">
    <source>
        <dbReference type="HAMAP-Rule" id="MF_00532"/>
    </source>
</evidence>
<evidence type="ECO:0000305" key="2"/>
<gene>
    <name evidence="1" type="primary">rpsI</name>
    <name type="ordered locus">BAA_0161</name>
</gene>
<proteinExistence type="inferred from homology"/>
<sequence length="130" mass="14481">MAQVQYYGTGRRKSSVARVRLVSGEGRVIINGRDFENYIPFAALREVVKQPLVATETLGNYDVLVNVNGGGYTGQAGAIRHGISRALLKADPEYRLTLKRAGLLTRDARMKERKKYGLKGARRAPQFSKR</sequence>
<name>RS9_BACAA</name>
<organism>
    <name type="scientific">Bacillus anthracis (strain A0248)</name>
    <dbReference type="NCBI Taxonomy" id="592021"/>
    <lineage>
        <taxon>Bacteria</taxon>
        <taxon>Bacillati</taxon>
        <taxon>Bacillota</taxon>
        <taxon>Bacilli</taxon>
        <taxon>Bacillales</taxon>
        <taxon>Bacillaceae</taxon>
        <taxon>Bacillus</taxon>
        <taxon>Bacillus cereus group</taxon>
    </lineage>
</organism>
<protein>
    <recommendedName>
        <fullName evidence="1">Small ribosomal subunit protein uS9</fullName>
    </recommendedName>
    <alternativeName>
        <fullName evidence="2">30S ribosomal protein S9</fullName>
    </alternativeName>
</protein>
<dbReference type="EMBL" id="CP001598">
    <property type="protein sequence ID" value="ACQ47700.1"/>
    <property type="molecule type" value="Genomic_DNA"/>
</dbReference>
<dbReference type="RefSeq" id="WP_000079988.1">
    <property type="nucleotide sequence ID" value="NC_012659.1"/>
</dbReference>
<dbReference type="SMR" id="C3PAK4"/>
<dbReference type="GeneID" id="45020189"/>
<dbReference type="KEGG" id="bai:BAA_0161"/>
<dbReference type="HOGENOM" id="CLU_046483_2_1_9"/>
<dbReference type="GO" id="GO:0022627">
    <property type="term" value="C:cytosolic small ribosomal subunit"/>
    <property type="evidence" value="ECO:0007669"/>
    <property type="project" value="TreeGrafter"/>
</dbReference>
<dbReference type="GO" id="GO:0003723">
    <property type="term" value="F:RNA binding"/>
    <property type="evidence" value="ECO:0007669"/>
    <property type="project" value="TreeGrafter"/>
</dbReference>
<dbReference type="GO" id="GO:0003735">
    <property type="term" value="F:structural constituent of ribosome"/>
    <property type="evidence" value="ECO:0007669"/>
    <property type="project" value="InterPro"/>
</dbReference>
<dbReference type="GO" id="GO:0006412">
    <property type="term" value="P:translation"/>
    <property type="evidence" value="ECO:0007669"/>
    <property type="project" value="UniProtKB-UniRule"/>
</dbReference>
<dbReference type="FunFam" id="3.30.230.10:FF:000001">
    <property type="entry name" value="30S ribosomal protein S9"/>
    <property type="match status" value="1"/>
</dbReference>
<dbReference type="Gene3D" id="3.30.230.10">
    <property type="match status" value="1"/>
</dbReference>
<dbReference type="HAMAP" id="MF_00532_B">
    <property type="entry name" value="Ribosomal_uS9_B"/>
    <property type="match status" value="1"/>
</dbReference>
<dbReference type="InterPro" id="IPR020568">
    <property type="entry name" value="Ribosomal_Su5_D2-typ_SF"/>
</dbReference>
<dbReference type="InterPro" id="IPR000754">
    <property type="entry name" value="Ribosomal_uS9"/>
</dbReference>
<dbReference type="InterPro" id="IPR023035">
    <property type="entry name" value="Ribosomal_uS9_bac/plastid"/>
</dbReference>
<dbReference type="InterPro" id="IPR020574">
    <property type="entry name" value="Ribosomal_uS9_CS"/>
</dbReference>
<dbReference type="InterPro" id="IPR014721">
    <property type="entry name" value="Ribsml_uS5_D2-typ_fold_subgr"/>
</dbReference>
<dbReference type="NCBIfam" id="NF001099">
    <property type="entry name" value="PRK00132.1"/>
    <property type="match status" value="1"/>
</dbReference>
<dbReference type="PANTHER" id="PTHR21569">
    <property type="entry name" value="RIBOSOMAL PROTEIN S9"/>
    <property type="match status" value="1"/>
</dbReference>
<dbReference type="PANTHER" id="PTHR21569:SF1">
    <property type="entry name" value="SMALL RIBOSOMAL SUBUNIT PROTEIN US9M"/>
    <property type="match status" value="1"/>
</dbReference>
<dbReference type="Pfam" id="PF00380">
    <property type="entry name" value="Ribosomal_S9"/>
    <property type="match status" value="1"/>
</dbReference>
<dbReference type="SUPFAM" id="SSF54211">
    <property type="entry name" value="Ribosomal protein S5 domain 2-like"/>
    <property type="match status" value="1"/>
</dbReference>
<dbReference type="PROSITE" id="PS00360">
    <property type="entry name" value="RIBOSOMAL_S9"/>
    <property type="match status" value="1"/>
</dbReference>
<feature type="chain" id="PRO_1000146430" description="Small ribosomal subunit protein uS9">
    <location>
        <begin position="1"/>
        <end position="130"/>
    </location>
</feature>
<comment type="similarity">
    <text evidence="1">Belongs to the universal ribosomal protein uS9 family.</text>
</comment>
<accession>C3PAK4</accession>
<reference key="1">
    <citation type="submission" date="2009-04" db="EMBL/GenBank/DDBJ databases">
        <title>Genome sequence of Bacillus anthracis A0248.</title>
        <authorList>
            <person name="Dodson R.J."/>
            <person name="Munk A.C."/>
            <person name="Bruce D."/>
            <person name="Detter C."/>
            <person name="Tapia R."/>
            <person name="Sutton G."/>
            <person name="Sims D."/>
            <person name="Brettin T."/>
        </authorList>
    </citation>
    <scope>NUCLEOTIDE SEQUENCE [LARGE SCALE GENOMIC DNA]</scope>
    <source>
        <strain>A0248</strain>
    </source>
</reference>
<keyword id="KW-0687">Ribonucleoprotein</keyword>
<keyword id="KW-0689">Ribosomal protein</keyword>